<evidence type="ECO:0000250" key="1">
    <source>
        <dbReference type="UniProtKB" id="L0E2Z4"/>
    </source>
</evidence>
<evidence type="ECO:0000250" key="2">
    <source>
        <dbReference type="UniProtKB" id="O93868"/>
    </source>
</evidence>
<evidence type="ECO:0000255" key="3">
    <source>
        <dbReference type="PROSITE-ProRule" id="PRU10001"/>
    </source>
</evidence>
<evidence type="ECO:0000269" key="4">
    <source>
    </source>
</evidence>
<evidence type="ECO:0000305" key="5"/>
<evidence type="ECO:0007744" key="6">
    <source>
        <dbReference type="PDB" id="3KZV"/>
    </source>
</evidence>
<evidence type="ECO:0007744" key="7">
    <source>
        <dbReference type="PDB" id="6UHX"/>
    </source>
</evidence>
<evidence type="ECO:0007829" key="8">
    <source>
        <dbReference type="PDB" id="3KZV"/>
    </source>
</evidence>
<evidence type="ECO:0007829" key="9">
    <source>
        <dbReference type="PDB" id="6UHX"/>
    </source>
</evidence>
<proteinExistence type="evidence at protein level"/>
<organism>
    <name type="scientific">Saccharomyces cerevisiae (strain ATCC 204508 / S288c)</name>
    <name type="common">Baker's yeast</name>
    <dbReference type="NCBI Taxonomy" id="559292"/>
    <lineage>
        <taxon>Eukaryota</taxon>
        <taxon>Fungi</taxon>
        <taxon>Dikarya</taxon>
        <taxon>Ascomycota</taxon>
        <taxon>Saccharomycotina</taxon>
        <taxon>Saccharomycetes</taxon>
        <taxon>Saccharomycetales</taxon>
        <taxon>Saccharomycetaceae</taxon>
        <taxon>Saccharomyces</taxon>
    </lineage>
</organism>
<reference key="1">
    <citation type="journal article" date="1997" name="Nature">
        <title>The nucleotide sequence of Saccharomyces cerevisiae chromosome IX.</title>
        <authorList>
            <person name="Churcher C.M."/>
            <person name="Bowman S."/>
            <person name="Badcock K."/>
            <person name="Bankier A.T."/>
            <person name="Brown D."/>
            <person name="Chillingworth T."/>
            <person name="Connor R."/>
            <person name="Devlin K."/>
            <person name="Gentles S."/>
            <person name="Hamlin N."/>
            <person name="Harris D.E."/>
            <person name="Horsnell T."/>
            <person name="Hunt S."/>
            <person name="Jagels K."/>
            <person name="Jones M."/>
            <person name="Lye G."/>
            <person name="Moule S."/>
            <person name="Odell C."/>
            <person name="Pearson D."/>
            <person name="Rajandream M.A."/>
            <person name="Rice P."/>
            <person name="Rowley N."/>
            <person name="Skelton J."/>
            <person name="Smith V."/>
            <person name="Walsh S.V."/>
            <person name="Whitehead S."/>
            <person name="Barrell B.G."/>
        </authorList>
    </citation>
    <scope>NUCLEOTIDE SEQUENCE [LARGE SCALE GENOMIC DNA]</scope>
    <source>
        <strain>ATCC 204508 / S288c</strain>
    </source>
</reference>
<reference key="2">
    <citation type="journal article" date="2014" name="G3 (Bethesda)">
        <title>The reference genome sequence of Saccharomyces cerevisiae: Then and now.</title>
        <authorList>
            <person name="Engel S.R."/>
            <person name="Dietrich F.S."/>
            <person name="Fisk D.G."/>
            <person name="Binkley G."/>
            <person name="Balakrishnan R."/>
            <person name="Costanzo M.C."/>
            <person name="Dwight S.S."/>
            <person name="Hitz B.C."/>
            <person name="Karra K."/>
            <person name="Nash R.S."/>
            <person name="Weng S."/>
            <person name="Wong E.D."/>
            <person name="Lloyd P."/>
            <person name="Skrzypek M.S."/>
            <person name="Miyasato S.R."/>
            <person name="Simison M."/>
            <person name="Cherry J.M."/>
        </authorList>
    </citation>
    <scope>GENOME REANNOTATION</scope>
    <source>
        <strain>ATCC 204508 / S288c</strain>
    </source>
</reference>
<reference key="3">
    <citation type="journal article" date="2007" name="Genome Res.">
        <title>Approaching a complete repository of sequence-verified protein-encoding clones for Saccharomyces cerevisiae.</title>
        <authorList>
            <person name="Hu Y."/>
            <person name="Rolfs A."/>
            <person name="Bhullar B."/>
            <person name="Murthy T.V.S."/>
            <person name="Zhu C."/>
            <person name="Berger M.F."/>
            <person name="Camargo A.A."/>
            <person name="Kelley F."/>
            <person name="McCarron S."/>
            <person name="Jepson D."/>
            <person name="Richardson A."/>
            <person name="Raphael J."/>
            <person name="Moreira D."/>
            <person name="Taycher E."/>
            <person name="Zuo D."/>
            <person name="Mohr S."/>
            <person name="Kane M.F."/>
            <person name="Williamson J."/>
            <person name="Simpson A.J.G."/>
            <person name="Bulyk M.L."/>
            <person name="Harlow E."/>
            <person name="Marsischky G."/>
            <person name="Kolodner R.D."/>
            <person name="LaBaer J."/>
        </authorList>
    </citation>
    <scope>NUCLEOTIDE SEQUENCE [GENOMIC DNA]</scope>
    <source>
        <strain>ATCC 204508 / S288c</strain>
    </source>
</reference>
<reference key="4">
    <citation type="journal article" date="2003" name="Nature">
        <title>Global analysis of protein expression in yeast.</title>
        <authorList>
            <person name="Ghaemmaghami S."/>
            <person name="Huh W.-K."/>
            <person name="Bower K."/>
            <person name="Howson R.W."/>
            <person name="Belle A."/>
            <person name="Dephoure N."/>
            <person name="O'Shea E.K."/>
            <person name="Weissman J.S."/>
        </authorList>
    </citation>
    <scope>LEVEL OF PROTEIN EXPRESSION [LARGE SCALE ANALYSIS]</scope>
</reference>
<reference evidence="6" key="5">
    <citation type="submission" date="2009-12" db="PDB data bank">
        <title>The crystal structure of a cytoplasmic protein with unknown function from Saccharomyces cerevisiae.</title>
        <authorList>
            <person name="Zhang R."/>
            <person name="Xu X."/>
            <person name="Cui H."/>
            <person name="Savchenko A."/>
            <person name="Edwards A."/>
            <person name="Joachimiak A."/>
        </authorList>
    </citation>
    <scope>X-RAY CRYSTALLOGRAPHY (2.00 ANGSTROMS)</scope>
</reference>
<reference evidence="7" key="6">
    <citation type="submission" date="2019-09" db="PDB data bank">
        <title>Crystal structure of YIR035C short chain dehydrogenases/reductase from Saccharomyces cerevisiae.</title>
        <authorList>
            <person name="Chen C."/>
        </authorList>
    </citation>
    <scope>X-RAY CRYSTALLOGRAPHY (2.75 ANGSTROMS)</scope>
</reference>
<dbReference type="EC" id="1.-.-.-"/>
<dbReference type="EMBL" id="Z38061">
    <property type="protein sequence ID" value="CAA86195.1"/>
    <property type="molecule type" value="Genomic_DNA"/>
</dbReference>
<dbReference type="EMBL" id="AY692591">
    <property type="protein sequence ID" value="AAT92610.1"/>
    <property type="molecule type" value="Genomic_DNA"/>
</dbReference>
<dbReference type="EMBL" id="BK006942">
    <property type="protein sequence ID" value="DAA08582.1"/>
    <property type="molecule type" value="Genomic_DNA"/>
</dbReference>
<dbReference type="PIR" id="S48497">
    <property type="entry name" value="S48497"/>
</dbReference>
<dbReference type="PDB" id="3KZV">
    <property type="method" value="X-ray"/>
    <property type="resolution" value="2.00 A"/>
    <property type="chains" value="A=1-254"/>
</dbReference>
<dbReference type="PDB" id="6UHX">
    <property type="method" value="X-ray"/>
    <property type="resolution" value="2.75 A"/>
    <property type="chains" value="A/B=1-254"/>
</dbReference>
<dbReference type="PDBsum" id="3KZV"/>
<dbReference type="PDBsum" id="6UHX"/>
<dbReference type="SMR" id="P40579"/>
<dbReference type="BioGRID" id="35026">
    <property type="interactions" value="52"/>
</dbReference>
<dbReference type="DIP" id="DIP-4612N"/>
<dbReference type="FunCoup" id="P40579">
    <property type="interactions" value="112"/>
</dbReference>
<dbReference type="IntAct" id="P40579">
    <property type="interactions" value="4"/>
</dbReference>
<dbReference type="MINT" id="P40579"/>
<dbReference type="STRING" id="4932.YIR035C"/>
<dbReference type="iPTMnet" id="P40579"/>
<dbReference type="PaxDb" id="4932-YIR035C"/>
<dbReference type="PeptideAtlas" id="P40579"/>
<dbReference type="EnsemblFungi" id="YIR035C_mRNA">
    <property type="protein sequence ID" value="YIR035C"/>
    <property type="gene ID" value="YIR035C"/>
</dbReference>
<dbReference type="KEGG" id="sce:YIR035C"/>
<dbReference type="AGR" id="SGD:S000001474"/>
<dbReference type="SGD" id="S000001474">
    <property type="gene designation" value="YIR035C"/>
</dbReference>
<dbReference type="VEuPathDB" id="FungiDB:YIR035C"/>
<dbReference type="eggNOG" id="KOG1204">
    <property type="taxonomic scope" value="Eukaryota"/>
</dbReference>
<dbReference type="GeneTree" id="ENSGT00940000176436"/>
<dbReference type="HOGENOM" id="CLU_010194_2_11_1"/>
<dbReference type="InParanoid" id="P40579"/>
<dbReference type="OMA" id="SHVDEWR"/>
<dbReference type="OrthoDB" id="153074at2759"/>
<dbReference type="BioCyc" id="YEAST:G3O-31449-MONOMER"/>
<dbReference type="BioGRID-ORCS" id="854853">
    <property type="hits" value="0 hits in 10 CRISPR screens"/>
</dbReference>
<dbReference type="EvolutionaryTrace" id="P40579"/>
<dbReference type="PRO" id="PR:P40579"/>
<dbReference type="Proteomes" id="UP000002311">
    <property type="component" value="Chromosome IX"/>
</dbReference>
<dbReference type="RNAct" id="P40579">
    <property type="molecule type" value="protein"/>
</dbReference>
<dbReference type="GO" id="GO:0005737">
    <property type="term" value="C:cytoplasm"/>
    <property type="evidence" value="ECO:0007005"/>
    <property type="project" value="SGD"/>
</dbReference>
<dbReference type="GO" id="GO:0102306">
    <property type="term" value="F:benzil reductase [(S)-benzoin-forming] activity"/>
    <property type="evidence" value="ECO:0000314"/>
    <property type="project" value="SGD"/>
</dbReference>
<dbReference type="GO" id="GO:0050664">
    <property type="term" value="F:oxidoreductase activity, acting on NAD(P)H, oxygen as acceptor"/>
    <property type="evidence" value="ECO:0000318"/>
    <property type="project" value="GO_Central"/>
</dbReference>
<dbReference type="CDD" id="cd05367">
    <property type="entry name" value="SPR-like_SDR_c"/>
    <property type="match status" value="1"/>
</dbReference>
<dbReference type="FunFam" id="3.40.50.720:FF:000281">
    <property type="entry name" value="Uncharacterized oxidoreductase YIR035C"/>
    <property type="match status" value="1"/>
</dbReference>
<dbReference type="Gene3D" id="3.40.50.720">
    <property type="entry name" value="NAD(P)-binding Rossmann-like Domain"/>
    <property type="match status" value="1"/>
</dbReference>
<dbReference type="InterPro" id="IPR036291">
    <property type="entry name" value="NAD(P)-bd_dom_sf"/>
</dbReference>
<dbReference type="InterPro" id="IPR020904">
    <property type="entry name" value="Sc_DH/Rdtase_CS"/>
</dbReference>
<dbReference type="InterPro" id="IPR002347">
    <property type="entry name" value="SDR_fam"/>
</dbReference>
<dbReference type="PANTHER" id="PTHR43008">
    <property type="entry name" value="BENZIL REDUCTASE"/>
    <property type="match status" value="1"/>
</dbReference>
<dbReference type="PANTHER" id="PTHR43008:SF8">
    <property type="entry name" value="BENZIL REDUCTASE ((S)-BENZOIN FORMING) IRC24"/>
    <property type="match status" value="1"/>
</dbReference>
<dbReference type="Pfam" id="PF00106">
    <property type="entry name" value="adh_short"/>
    <property type="match status" value="1"/>
</dbReference>
<dbReference type="PRINTS" id="PR00081">
    <property type="entry name" value="GDHRDH"/>
</dbReference>
<dbReference type="PRINTS" id="PR00080">
    <property type="entry name" value="SDRFAMILY"/>
</dbReference>
<dbReference type="SUPFAM" id="SSF51735">
    <property type="entry name" value="NAD(P)-binding Rossmann-fold domains"/>
    <property type="match status" value="1"/>
</dbReference>
<dbReference type="PROSITE" id="PS00061">
    <property type="entry name" value="ADH_SHORT"/>
    <property type="match status" value="1"/>
</dbReference>
<gene>
    <name type="ordered locus">YIR035C</name>
</gene>
<comment type="miscellaneous">
    <text evidence="4">Present with 2370 molecules/cell in log phase SD medium.</text>
</comment>
<comment type="similarity">
    <text evidence="5">Belongs to the short-chain dehydrogenases/reductases (SDR) family.</text>
</comment>
<protein>
    <recommendedName>
        <fullName>Uncharacterized oxidoreductase YIR035C</fullName>
        <ecNumber>1.-.-.-</ecNumber>
    </recommendedName>
</protein>
<sequence>MGKVILVTGVSRGIGKSIVDVLFSLDKDTVVYGVARSEAPLKKLKEKYGDRFFYVVGDITEDSVLKQLVNAAVKGHGKIDSLVANAGVLEPVQNVNEIDVNAWKKLYDINFFSIVSLVGIALPELKKTNGNVVFVSSDACNMYFSSWGAYGSSKAALNHFAMTLANEERQVKAIAVAPGIVDTDMQVNIRENVGPSSMSAEQLKMFRGLKENNQLLDSSVPATVYAKLALHGIPDGVNGQYLSYNDPALADFMP</sequence>
<keyword id="KW-0002">3D-structure</keyword>
<keyword id="KW-0521">NADP</keyword>
<keyword id="KW-0560">Oxidoreductase</keyword>
<keyword id="KW-1185">Reference proteome</keyword>
<feature type="chain" id="PRO_0000054870" description="Uncharacterized oxidoreductase YIR035C">
    <location>
        <begin position="1"/>
        <end position="254"/>
    </location>
</feature>
<feature type="active site" description="Proton donor" evidence="2">
    <location>
        <position position="136"/>
    </location>
</feature>
<feature type="active site" description="Proton acceptor" evidence="3">
    <location>
        <position position="150"/>
    </location>
</feature>
<feature type="active site" description="Lowers pKa of active site Tyr" evidence="2">
    <location>
        <position position="154"/>
    </location>
</feature>
<feature type="binding site" evidence="1">
    <location>
        <position position="7"/>
    </location>
    <ligand>
        <name>NADP(+)</name>
        <dbReference type="ChEBI" id="CHEBI:58349"/>
    </ligand>
</feature>
<feature type="binding site" evidence="2">
    <location>
        <position position="85"/>
    </location>
    <ligand>
        <name>NADP(+)</name>
        <dbReference type="ChEBI" id="CHEBI:58349"/>
    </ligand>
</feature>
<feature type="binding site" evidence="2">
    <location>
        <position position="150"/>
    </location>
    <ligand>
        <name>NADP(+)</name>
        <dbReference type="ChEBI" id="CHEBI:58349"/>
    </ligand>
</feature>
<feature type="binding site" evidence="2">
    <location>
        <position position="154"/>
    </location>
    <ligand>
        <name>NADP(+)</name>
        <dbReference type="ChEBI" id="CHEBI:58349"/>
    </ligand>
</feature>
<feature type="binding site" evidence="2">
    <location>
        <position position="181"/>
    </location>
    <ligand>
        <name>NADP(+)</name>
        <dbReference type="ChEBI" id="CHEBI:58349"/>
    </ligand>
</feature>
<feature type="binding site" evidence="1">
    <location>
        <position position="183"/>
    </location>
    <ligand>
        <name>NADP(+)</name>
        <dbReference type="ChEBI" id="CHEBI:58349"/>
    </ligand>
</feature>
<feature type="strand" evidence="8">
    <location>
        <begin position="4"/>
        <end position="7"/>
    </location>
</feature>
<feature type="helix" evidence="8">
    <location>
        <begin position="13"/>
        <end position="25"/>
    </location>
</feature>
<feature type="strand" evidence="8">
    <location>
        <begin position="30"/>
        <end position="36"/>
    </location>
</feature>
<feature type="helix" evidence="8">
    <location>
        <begin position="38"/>
        <end position="48"/>
    </location>
</feature>
<feature type="helix" evidence="8">
    <location>
        <begin position="49"/>
        <end position="51"/>
    </location>
</feature>
<feature type="strand" evidence="8">
    <location>
        <begin position="52"/>
        <end position="57"/>
    </location>
</feature>
<feature type="helix" evidence="8">
    <location>
        <begin position="62"/>
        <end position="76"/>
    </location>
</feature>
<feature type="strand" evidence="8">
    <location>
        <begin position="81"/>
        <end position="85"/>
    </location>
</feature>
<feature type="turn" evidence="8">
    <location>
        <begin position="93"/>
        <end position="96"/>
    </location>
</feature>
<feature type="helix" evidence="8">
    <location>
        <begin position="100"/>
        <end position="110"/>
    </location>
</feature>
<feature type="helix" evidence="8">
    <location>
        <begin position="112"/>
        <end position="128"/>
    </location>
</feature>
<feature type="strand" evidence="8">
    <location>
        <begin position="131"/>
        <end position="135"/>
    </location>
</feature>
<feature type="helix" evidence="9">
    <location>
        <begin position="138"/>
        <end position="140"/>
    </location>
</feature>
<feature type="helix" evidence="8">
    <location>
        <begin position="148"/>
        <end position="155"/>
    </location>
</feature>
<feature type="helix" evidence="8">
    <location>
        <begin position="157"/>
        <end position="167"/>
    </location>
</feature>
<feature type="strand" evidence="8">
    <location>
        <begin position="171"/>
        <end position="177"/>
    </location>
</feature>
<feature type="helix" evidence="9">
    <location>
        <begin position="184"/>
        <end position="191"/>
    </location>
</feature>
<feature type="turn" evidence="8">
    <location>
        <begin position="195"/>
        <end position="197"/>
    </location>
</feature>
<feature type="helix" evidence="8">
    <location>
        <begin position="200"/>
        <end position="210"/>
    </location>
</feature>
<feature type="helix" evidence="8">
    <location>
        <begin position="219"/>
        <end position="231"/>
    </location>
</feature>
<feature type="helix" evidence="8">
    <location>
        <begin position="235"/>
        <end position="237"/>
    </location>
</feature>
<feature type="strand" evidence="8">
    <location>
        <begin position="241"/>
        <end position="243"/>
    </location>
</feature>
<feature type="helix" evidence="8">
    <location>
        <begin position="247"/>
        <end position="252"/>
    </location>
</feature>
<name>YIV5_YEAST</name>
<accession>P40579</accession>
<accession>D6VVW6</accession>